<gene>
    <name type="primary">Ubl3</name>
</gene>
<evidence type="ECO:0000250" key="1"/>
<evidence type="ECO:0000255" key="2">
    <source>
        <dbReference type="PROSITE-ProRule" id="PRU00214"/>
    </source>
</evidence>
<evidence type="ECO:0000305" key="3"/>
<evidence type="ECO:0000305" key="4">
    <source>
    </source>
</evidence>
<evidence type="ECO:0007829" key="5">
    <source>
        <dbReference type="PDB" id="1WGH"/>
    </source>
</evidence>
<proteinExistence type="evidence at protein level"/>
<feature type="chain" id="PRO_0000114863" description="Ubiquitin-like protein 3">
    <location>
        <begin position="1"/>
        <end position="114"/>
    </location>
</feature>
<feature type="propeptide" id="PRO_0000248184" description="Removed in mature form" evidence="3">
    <location>
        <begin position="115"/>
        <end position="117"/>
    </location>
</feature>
<feature type="domain" description="Ubiquitin-like" evidence="2">
    <location>
        <begin position="10"/>
        <end position="88"/>
    </location>
</feature>
<feature type="modified residue" description="Cysteine methyl ester" evidence="3">
    <location>
        <position position="114"/>
    </location>
</feature>
<feature type="lipid moiety-binding region" description="S-palmitoyl cysteine" evidence="4">
    <location>
        <position position="113"/>
    </location>
</feature>
<feature type="lipid moiety-binding region" description="S-geranylgeranyl cysteine" evidence="4">
    <location>
        <position position="114"/>
    </location>
</feature>
<feature type="strand" evidence="5">
    <location>
        <begin position="7"/>
        <end position="15"/>
    </location>
</feature>
<feature type="strand" evidence="5">
    <location>
        <begin position="17"/>
        <end position="19"/>
    </location>
</feature>
<feature type="strand" evidence="5">
    <location>
        <begin position="21"/>
        <end position="26"/>
    </location>
</feature>
<feature type="helix" evidence="5">
    <location>
        <begin position="32"/>
        <end position="41"/>
    </location>
</feature>
<feature type="strand" evidence="5">
    <location>
        <begin position="42"/>
        <end position="44"/>
    </location>
</feature>
<feature type="turn" evidence="5">
    <location>
        <begin position="55"/>
        <end position="57"/>
    </location>
</feature>
<feature type="strand" evidence="5">
    <location>
        <begin position="58"/>
        <end position="62"/>
    </location>
</feature>
<feature type="strand" evidence="5">
    <location>
        <begin position="65"/>
        <end position="67"/>
    </location>
</feature>
<feature type="turn" evidence="5">
    <location>
        <begin position="73"/>
        <end position="77"/>
    </location>
</feature>
<feature type="strand" evidence="5">
    <location>
        <begin position="83"/>
        <end position="90"/>
    </location>
</feature>
<feature type="strand" evidence="5">
    <location>
        <begin position="95"/>
        <end position="97"/>
    </location>
</feature>
<dbReference type="EMBL" id="AF044222">
    <property type="protein sequence ID" value="AAD02324.1"/>
    <property type="molecule type" value="mRNA"/>
</dbReference>
<dbReference type="EMBL" id="AK145952">
    <property type="protein sequence ID" value="BAE26780.1"/>
    <property type="molecule type" value="mRNA"/>
</dbReference>
<dbReference type="EMBL" id="BC024507">
    <property type="protein sequence ID" value="AAH24507.1"/>
    <property type="molecule type" value="mRNA"/>
</dbReference>
<dbReference type="EMBL" id="BC025595">
    <property type="protein sequence ID" value="AAH25595.1"/>
    <property type="molecule type" value="mRNA"/>
</dbReference>
<dbReference type="EMBL" id="BC043729">
    <property type="protein sequence ID" value="AAH43729.1"/>
    <property type="molecule type" value="mRNA"/>
</dbReference>
<dbReference type="CCDS" id="CCDS39403.1"/>
<dbReference type="RefSeq" id="NP_001346128.1">
    <property type="nucleotide sequence ID" value="NM_001359199.1"/>
</dbReference>
<dbReference type="RefSeq" id="NP_036038.1">
    <property type="nucleotide sequence ID" value="NM_011908.2"/>
</dbReference>
<dbReference type="RefSeq" id="XP_006504895.1">
    <property type="nucleotide sequence ID" value="XM_006504832.4"/>
</dbReference>
<dbReference type="PDB" id="1WGH">
    <property type="method" value="NMR"/>
    <property type="chains" value="A=1-103"/>
</dbReference>
<dbReference type="PDBsum" id="1WGH"/>
<dbReference type="BMRB" id="Q9Z2M6"/>
<dbReference type="SMR" id="Q9Z2M6"/>
<dbReference type="BioGRID" id="204901">
    <property type="interactions" value="1"/>
</dbReference>
<dbReference type="FunCoup" id="Q9Z2M6">
    <property type="interactions" value="1292"/>
</dbReference>
<dbReference type="STRING" id="10090.ENSMUSP00000078303"/>
<dbReference type="iPTMnet" id="Q9Z2M6"/>
<dbReference type="PhosphoSitePlus" id="Q9Z2M6"/>
<dbReference type="SwissPalm" id="Q9Z2M6"/>
<dbReference type="PaxDb" id="10090-ENSMUSP00000078303"/>
<dbReference type="ProteomicsDB" id="298451"/>
<dbReference type="Pumba" id="Q9Z2M6"/>
<dbReference type="Antibodypedia" id="22737">
    <property type="antibodies" value="161 antibodies from 25 providers"/>
</dbReference>
<dbReference type="Ensembl" id="ENSMUST00000079324.14">
    <property type="protein sequence ID" value="ENSMUSP00000078303.8"/>
    <property type="gene ID" value="ENSMUSG00000001687.16"/>
</dbReference>
<dbReference type="Ensembl" id="ENSMUST00000164904.2">
    <property type="protein sequence ID" value="ENSMUSP00000131049.2"/>
    <property type="gene ID" value="ENSMUSG00000001687.16"/>
</dbReference>
<dbReference type="Ensembl" id="ENSMUST00000201595.4">
    <property type="protein sequence ID" value="ENSMUSP00000144073.2"/>
    <property type="gene ID" value="ENSMUSG00000001687.16"/>
</dbReference>
<dbReference type="GeneID" id="24109"/>
<dbReference type="KEGG" id="mmu:24109"/>
<dbReference type="UCSC" id="uc009aou.1">
    <property type="organism name" value="mouse"/>
</dbReference>
<dbReference type="AGR" id="MGI:1344373"/>
<dbReference type="CTD" id="5412"/>
<dbReference type="MGI" id="MGI:1344373">
    <property type="gene designation" value="Ubl3"/>
</dbReference>
<dbReference type="VEuPathDB" id="HostDB:ENSMUSG00000001687"/>
<dbReference type="eggNOG" id="ENOG502RYGN">
    <property type="taxonomic scope" value="Eukaryota"/>
</dbReference>
<dbReference type="GeneTree" id="ENSGT00390000004952"/>
<dbReference type="HOGENOM" id="CLU_151471_0_0_1"/>
<dbReference type="InParanoid" id="Q9Z2M6"/>
<dbReference type="OMA" id="WPDEWYE"/>
<dbReference type="OrthoDB" id="1043111at2759"/>
<dbReference type="PhylomeDB" id="Q9Z2M6"/>
<dbReference type="TreeFam" id="TF314489"/>
<dbReference type="BioGRID-ORCS" id="24109">
    <property type="hits" value="3 hits in 78 CRISPR screens"/>
</dbReference>
<dbReference type="ChiTaRS" id="Ubl3">
    <property type="organism name" value="mouse"/>
</dbReference>
<dbReference type="EvolutionaryTrace" id="Q9Z2M6"/>
<dbReference type="PRO" id="PR:Q9Z2M6"/>
<dbReference type="Proteomes" id="UP000000589">
    <property type="component" value="Chromosome 5"/>
</dbReference>
<dbReference type="RNAct" id="Q9Z2M6">
    <property type="molecule type" value="protein"/>
</dbReference>
<dbReference type="Bgee" id="ENSMUSG00000001687">
    <property type="expression patterns" value="Expressed in extensor digitorum longus and 266 other cell types or tissues"/>
</dbReference>
<dbReference type="GO" id="GO:0005886">
    <property type="term" value="C:plasma membrane"/>
    <property type="evidence" value="ECO:0007669"/>
    <property type="project" value="UniProtKB-SubCell"/>
</dbReference>
<dbReference type="CDD" id="cd17048">
    <property type="entry name" value="Ubl_UBL3"/>
    <property type="match status" value="1"/>
</dbReference>
<dbReference type="FunFam" id="3.10.20.90:FF:000167">
    <property type="entry name" value="Ubiquitin-like 3a"/>
    <property type="match status" value="1"/>
</dbReference>
<dbReference type="Gene3D" id="3.10.20.90">
    <property type="entry name" value="Phosphatidylinositol 3-kinase Catalytic Subunit, Chain A, domain 1"/>
    <property type="match status" value="1"/>
</dbReference>
<dbReference type="InterPro" id="IPR017000">
    <property type="entry name" value="MUB"/>
</dbReference>
<dbReference type="InterPro" id="IPR000626">
    <property type="entry name" value="Ubiquitin-like_dom"/>
</dbReference>
<dbReference type="InterPro" id="IPR029071">
    <property type="entry name" value="Ubiquitin-like_domsf"/>
</dbReference>
<dbReference type="InterPro" id="IPR040015">
    <property type="entry name" value="UBL3-like"/>
</dbReference>
<dbReference type="InterPro" id="IPR039540">
    <property type="entry name" value="UBL3-like_ubiquitin_dom"/>
</dbReference>
<dbReference type="InterPro" id="IPR047977">
    <property type="entry name" value="UBL3_Ubl_met"/>
</dbReference>
<dbReference type="PANTHER" id="PTHR13169:SF0">
    <property type="entry name" value="UBIQUITIN-LIKE PROTEIN 3"/>
    <property type="match status" value="1"/>
</dbReference>
<dbReference type="PANTHER" id="PTHR13169">
    <property type="entry name" value="UBIQUITIN-LIKE PROTEIN 3 HCG-1 PROTEIN"/>
    <property type="match status" value="1"/>
</dbReference>
<dbReference type="Pfam" id="PF13881">
    <property type="entry name" value="Rad60-SLD_2"/>
    <property type="match status" value="1"/>
</dbReference>
<dbReference type="PIRSF" id="PIRSF032572">
    <property type="entry name" value="MUB"/>
    <property type="match status" value="1"/>
</dbReference>
<dbReference type="SUPFAM" id="SSF54236">
    <property type="entry name" value="Ubiquitin-like"/>
    <property type="match status" value="1"/>
</dbReference>
<dbReference type="PROSITE" id="PS50053">
    <property type="entry name" value="UBIQUITIN_2"/>
    <property type="match status" value="1"/>
</dbReference>
<sequence length="117" mass="13180">MSSHVPADMINLRLILVSGKTKEFLFSPNDSASDIAKHVYDNWPMDWEEEQVSSPNILRLIYQGRFLHGNVTLGALKLPFGKTTVMHLVARETLPEPNSQGQRNREKTGESNCCVIL</sequence>
<reference key="1">
    <citation type="journal article" date="1999" name="Gene">
        <title>Cloning, mapping and expression of UBL3, a novel ubiquitin-like gene.</title>
        <authorList>
            <person name="Chadwick B.P."/>
            <person name="Kidd T."/>
            <person name="Sgouros J."/>
            <person name="Ish-Horowicz D."/>
            <person name="Frischauf A.-M."/>
        </authorList>
    </citation>
    <scope>NUCLEOTIDE SEQUENCE [MRNA]</scope>
</reference>
<reference key="2">
    <citation type="journal article" date="2005" name="Science">
        <title>The transcriptional landscape of the mammalian genome.</title>
        <authorList>
            <person name="Carninci P."/>
            <person name="Kasukawa T."/>
            <person name="Katayama S."/>
            <person name="Gough J."/>
            <person name="Frith M.C."/>
            <person name="Maeda N."/>
            <person name="Oyama R."/>
            <person name="Ravasi T."/>
            <person name="Lenhard B."/>
            <person name="Wells C."/>
            <person name="Kodzius R."/>
            <person name="Shimokawa K."/>
            <person name="Bajic V.B."/>
            <person name="Brenner S.E."/>
            <person name="Batalov S."/>
            <person name="Forrest A.R."/>
            <person name="Zavolan M."/>
            <person name="Davis M.J."/>
            <person name="Wilming L.G."/>
            <person name="Aidinis V."/>
            <person name="Allen J.E."/>
            <person name="Ambesi-Impiombato A."/>
            <person name="Apweiler R."/>
            <person name="Aturaliya R.N."/>
            <person name="Bailey T.L."/>
            <person name="Bansal M."/>
            <person name="Baxter L."/>
            <person name="Beisel K.W."/>
            <person name="Bersano T."/>
            <person name="Bono H."/>
            <person name="Chalk A.M."/>
            <person name="Chiu K.P."/>
            <person name="Choudhary V."/>
            <person name="Christoffels A."/>
            <person name="Clutterbuck D.R."/>
            <person name="Crowe M.L."/>
            <person name="Dalla E."/>
            <person name="Dalrymple B.P."/>
            <person name="de Bono B."/>
            <person name="Della Gatta G."/>
            <person name="di Bernardo D."/>
            <person name="Down T."/>
            <person name="Engstrom P."/>
            <person name="Fagiolini M."/>
            <person name="Faulkner G."/>
            <person name="Fletcher C.F."/>
            <person name="Fukushima T."/>
            <person name="Furuno M."/>
            <person name="Futaki S."/>
            <person name="Gariboldi M."/>
            <person name="Georgii-Hemming P."/>
            <person name="Gingeras T.R."/>
            <person name="Gojobori T."/>
            <person name="Green R.E."/>
            <person name="Gustincich S."/>
            <person name="Harbers M."/>
            <person name="Hayashi Y."/>
            <person name="Hensch T.K."/>
            <person name="Hirokawa N."/>
            <person name="Hill D."/>
            <person name="Huminiecki L."/>
            <person name="Iacono M."/>
            <person name="Ikeo K."/>
            <person name="Iwama A."/>
            <person name="Ishikawa T."/>
            <person name="Jakt M."/>
            <person name="Kanapin A."/>
            <person name="Katoh M."/>
            <person name="Kawasawa Y."/>
            <person name="Kelso J."/>
            <person name="Kitamura H."/>
            <person name="Kitano H."/>
            <person name="Kollias G."/>
            <person name="Krishnan S.P."/>
            <person name="Kruger A."/>
            <person name="Kummerfeld S.K."/>
            <person name="Kurochkin I.V."/>
            <person name="Lareau L.F."/>
            <person name="Lazarevic D."/>
            <person name="Lipovich L."/>
            <person name="Liu J."/>
            <person name="Liuni S."/>
            <person name="McWilliam S."/>
            <person name="Madan Babu M."/>
            <person name="Madera M."/>
            <person name="Marchionni L."/>
            <person name="Matsuda H."/>
            <person name="Matsuzawa S."/>
            <person name="Miki H."/>
            <person name="Mignone F."/>
            <person name="Miyake S."/>
            <person name="Morris K."/>
            <person name="Mottagui-Tabar S."/>
            <person name="Mulder N."/>
            <person name="Nakano N."/>
            <person name="Nakauchi H."/>
            <person name="Ng P."/>
            <person name="Nilsson R."/>
            <person name="Nishiguchi S."/>
            <person name="Nishikawa S."/>
            <person name="Nori F."/>
            <person name="Ohara O."/>
            <person name="Okazaki Y."/>
            <person name="Orlando V."/>
            <person name="Pang K.C."/>
            <person name="Pavan W.J."/>
            <person name="Pavesi G."/>
            <person name="Pesole G."/>
            <person name="Petrovsky N."/>
            <person name="Piazza S."/>
            <person name="Reed J."/>
            <person name="Reid J.F."/>
            <person name="Ring B.Z."/>
            <person name="Ringwald M."/>
            <person name="Rost B."/>
            <person name="Ruan Y."/>
            <person name="Salzberg S.L."/>
            <person name="Sandelin A."/>
            <person name="Schneider C."/>
            <person name="Schoenbach C."/>
            <person name="Sekiguchi K."/>
            <person name="Semple C.A."/>
            <person name="Seno S."/>
            <person name="Sessa L."/>
            <person name="Sheng Y."/>
            <person name="Shibata Y."/>
            <person name="Shimada H."/>
            <person name="Shimada K."/>
            <person name="Silva D."/>
            <person name="Sinclair B."/>
            <person name="Sperling S."/>
            <person name="Stupka E."/>
            <person name="Sugiura K."/>
            <person name="Sultana R."/>
            <person name="Takenaka Y."/>
            <person name="Taki K."/>
            <person name="Tammoja K."/>
            <person name="Tan S.L."/>
            <person name="Tang S."/>
            <person name="Taylor M.S."/>
            <person name="Tegner J."/>
            <person name="Teichmann S.A."/>
            <person name="Ueda H.R."/>
            <person name="van Nimwegen E."/>
            <person name="Verardo R."/>
            <person name="Wei C.L."/>
            <person name="Yagi K."/>
            <person name="Yamanishi H."/>
            <person name="Zabarovsky E."/>
            <person name="Zhu S."/>
            <person name="Zimmer A."/>
            <person name="Hide W."/>
            <person name="Bult C."/>
            <person name="Grimmond S.M."/>
            <person name="Teasdale R.D."/>
            <person name="Liu E.T."/>
            <person name="Brusic V."/>
            <person name="Quackenbush J."/>
            <person name="Wahlestedt C."/>
            <person name="Mattick J.S."/>
            <person name="Hume D.A."/>
            <person name="Kai C."/>
            <person name="Sasaki D."/>
            <person name="Tomaru Y."/>
            <person name="Fukuda S."/>
            <person name="Kanamori-Katayama M."/>
            <person name="Suzuki M."/>
            <person name="Aoki J."/>
            <person name="Arakawa T."/>
            <person name="Iida J."/>
            <person name="Imamura K."/>
            <person name="Itoh M."/>
            <person name="Kato T."/>
            <person name="Kawaji H."/>
            <person name="Kawagashira N."/>
            <person name="Kawashima T."/>
            <person name="Kojima M."/>
            <person name="Kondo S."/>
            <person name="Konno H."/>
            <person name="Nakano K."/>
            <person name="Ninomiya N."/>
            <person name="Nishio T."/>
            <person name="Okada M."/>
            <person name="Plessy C."/>
            <person name="Shibata K."/>
            <person name="Shiraki T."/>
            <person name="Suzuki S."/>
            <person name="Tagami M."/>
            <person name="Waki K."/>
            <person name="Watahiki A."/>
            <person name="Okamura-Oho Y."/>
            <person name="Suzuki H."/>
            <person name="Kawai J."/>
            <person name="Hayashizaki Y."/>
        </authorList>
    </citation>
    <scope>NUCLEOTIDE SEQUENCE [LARGE SCALE MRNA]</scope>
    <source>
        <strain>C57BL/6J</strain>
        <tissue>Placenta</tissue>
    </source>
</reference>
<reference key="3">
    <citation type="journal article" date="2004" name="Genome Res.">
        <title>The status, quality, and expansion of the NIH full-length cDNA project: the Mammalian Gene Collection (MGC).</title>
        <authorList>
            <consortium name="The MGC Project Team"/>
        </authorList>
    </citation>
    <scope>NUCLEOTIDE SEQUENCE [LARGE SCALE MRNA]</scope>
    <source>
        <strain>FVB/N</strain>
        <tissue>Colon</tissue>
        <tissue>Mammary tumor</tissue>
    </source>
</reference>
<reference key="4">
    <citation type="journal article" date="2006" name="J. Biol. Chem.">
        <title>MUBS: a family of ubiquitin-fold proteins that are plasma membrane-anchored by prenylation.</title>
        <authorList>
            <person name="Downes B.P."/>
            <person name="Saracco S.A."/>
            <person name="Lee S.S."/>
            <person name="Crowell D.N."/>
            <person name="Vierstra R.D."/>
        </authorList>
    </citation>
    <scope>IDENTIFICATION</scope>
    <scope>NOMENCLATURE</scope>
    <scope>PALMITOYLATION AT CYS-113</scope>
    <scope>ISOPRENYLATION AT CYS-114 IN VITRO</scope>
</reference>
<reference key="5">
    <citation type="journal article" date="2010" name="Cell">
        <title>A tissue-specific atlas of mouse protein phosphorylation and expression.</title>
        <authorList>
            <person name="Huttlin E.L."/>
            <person name="Jedrychowski M.P."/>
            <person name="Elias J.E."/>
            <person name="Goswami T."/>
            <person name="Rad R."/>
            <person name="Beausoleil S.A."/>
            <person name="Villen J."/>
            <person name="Haas W."/>
            <person name="Sowa M.E."/>
            <person name="Gygi S.P."/>
        </authorList>
    </citation>
    <scope>IDENTIFICATION BY MASS SPECTROMETRY [LARGE SCALE ANALYSIS]</scope>
    <source>
        <tissue>Brain</tissue>
        <tissue>Kidney</tissue>
        <tissue>Testis</tissue>
    </source>
</reference>
<reference key="6">
    <citation type="submission" date="2004-11" db="PDB data bank">
        <title>Solution structure of mouse ubiquitin-like 3 protein.</title>
        <authorList>
            <consortium name="RIKEN structural genomics initiative (RSGI)"/>
        </authorList>
    </citation>
    <scope>STRUCTURE BY NMR OF 1-103</scope>
</reference>
<organism>
    <name type="scientific">Mus musculus</name>
    <name type="common">Mouse</name>
    <dbReference type="NCBI Taxonomy" id="10090"/>
    <lineage>
        <taxon>Eukaryota</taxon>
        <taxon>Metazoa</taxon>
        <taxon>Chordata</taxon>
        <taxon>Craniata</taxon>
        <taxon>Vertebrata</taxon>
        <taxon>Euteleostomi</taxon>
        <taxon>Mammalia</taxon>
        <taxon>Eutheria</taxon>
        <taxon>Euarchontoglires</taxon>
        <taxon>Glires</taxon>
        <taxon>Rodentia</taxon>
        <taxon>Myomorpha</taxon>
        <taxon>Muroidea</taxon>
        <taxon>Muridae</taxon>
        <taxon>Murinae</taxon>
        <taxon>Mus</taxon>
        <taxon>Mus</taxon>
    </lineage>
</organism>
<keyword id="KW-0002">3D-structure</keyword>
<keyword id="KW-1003">Cell membrane</keyword>
<keyword id="KW-0449">Lipoprotein</keyword>
<keyword id="KW-0472">Membrane</keyword>
<keyword id="KW-0488">Methylation</keyword>
<keyword id="KW-0564">Palmitate</keyword>
<keyword id="KW-0636">Prenylation</keyword>
<keyword id="KW-1185">Reference proteome</keyword>
<comment type="subcellular location">
    <subcellularLocation>
        <location evidence="1">Cell membrane</location>
        <topology evidence="1">Lipid-anchor</topology>
    </subcellularLocation>
</comment>
<protein>
    <recommendedName>
        <fullName>Ubiquitin-like protein 3</fullName>
    </recommendedName>
    <alternativeName>
        <fullName>Membrane-anchored ubiquitin-fold protein</fullName>
        <shortName>MUB</shortName>
        <shortName>MmMUB</shortName>
    </alternativeName>
    <alternativeName>
        <fullName>Protein HCG-1</fullName>
    </alternativeName>
</protein>
<accession>Q9Z2M6</accession>
<accession>A4FTW0</accession>
<accession>Q3UKM1</accession>
<name>UBL3_MOUSE</name>